<comment type="function">
    <text evidence="1">A key translational regulator that binds mRNA to regulate translation initiation and/or mRNA stability. Mediates global changes in gene expression, shifting from rapid growth to stress survival by linking envelope stress, the stringent response and the catabolite repression systems. Usually binds in the 5'-UTR; binding at or near the Shine-Dalgarno sequence prevents ribosome-binding, repressing translation, binding elsewhere in the 5'-UTR can activate translation and/or stabilize the mRNA. Its function is antagonized by small RNA(s).</text>
</comment>
<comment type="subunit">
    <text evidence="1">Homodimer; the beta-strands of each monomer intercalate to form a hydrophobic core, while the alpha-helices form wings that extend away from the core.</text>
</comment>
<comment type="subcellular location">
    <subcellularLocation>
        <location evidence="1">Cytoplasm</location>
    </subcellularLocation>
</comment>
<comment type="similarity">
    <text evidence="1">Belongs to the CsrA/RsmA family.</text>
</comment>
<organism>
    <name type="scientific">Escherichia coli O8 (strain IAI1)</name>
    <dbReference type="NCBI Taxonomy" id="585034"/>
    <lineage>
        <taxon>Bacteria</taxon>
        <taxon>Pseudomonadati</taxon>
        <taxon>Pseudomonadota</taxon>
        <taxon>Gammaproteobacteria</taxon>
        <taxon>Enterobacterales</taxon>
        <taxon>Enterobacteriaceae</taxon>
        <taxon>Escherichia</taxon>
    </lineage>
</organism>
<protein>
    <recommendedName>
        <fullName evidence="1">Translational regulator CsrA</fullName>
    </recommendedName>
    <alternativeName>
        <fullName evidence="1">Carbon storage regulator</fullName>
    </alternativeName>
</protein>
<name>CSRA_ECO8A</name>
<evidence type="ECO:0000255" key="1">
    <source>
        <dbReference type="HAMAP-Rule" id="MF_00167"/>
    </source>
</evidence>
<accession>B7M9D3</accession>
<dbReference type="EMBL" id="CU928160">
    <property type="protein sequence ID" value="CAQ99612.1"/>
    <property type="molecule type" value="Genomic_DNA"/>
</dbReference>
<dbReference type="RefSeq" id="WP_000906486.1">
    <property type="nucleotide sequence ID" value="NC_011741.1"/>
</dbReference>
<dbReference type="SMR" id="B7M9D3"/>
<dbReference type="GeneID" id="98389839"/>
<dbReference type="KEGG" id="ecr:ECIAI1_2787"/>
<dbReference type="HOGENOM" id="CLU_164837_2_1_6"/>
<dbReference type="GO" id="GO:0005829">
    <property type="term" value="C:cytosol"/>
    <property type="evidence" value="ECO:0007669"/>
    <property type="project" value="TreeGrafter"/>
</dbReference>
<dbReference type="GO" id="GO:0048027">
    <property type="term" value="F:mRNA 5'-UTR binding"/>
    <property type="evidence" value="ECO:0007669"/>
    <property type="project" value="UniProtKB-UniRule"/>
</dbReference>
<dbReference type="GO" id="GO:0006402">
    <property type="term" value="P:mRNA catabolic process"/>
    <property type="evidence" value="ECO:0007669"/>
    <property type="project" value="InterPro"/>
</dbReference>
<dbReference type="GO" id="GO:0045947">
    <property type="term" value="P:negative regulation of translational initiation"/>
    <property type="evidence" value="ECO:0007669"/>
    <property type="project" value="UniProtKB-UniRule"/>
</dbReference>
<dbReference type="GO" id="GO:0045948">
    <property type="term" value="P:positive regulation of translational initiation"/>
    <property type="evidence" value="ECO:0007669"/>
    <property type="project" value="UniProtKB-UniRule"/>
</dbReference>
<dbReference type="GO" id="GO:0006109">
    <property type="term" value="P:regulation of carbohydrate metabolic process"/>
    <property type="evidence" value="ECO:0007669"/>
    <property type="project" value="UniProtKB-UniRule"/>
</dbReference>
<dbReference type="FunFam" id="2.60.40.4380:FF:000001">
    <property type="entry name" value="Translational regulator CsrA"/>
    <property type="match status" value="1"/>
</dbReference>
<dbReference type="Gene3D" id="2.60.40.4380">
    <property type="entry name" value="Translational regulator CsrA"/>
    <property type="match status" value="1"/>
</dbReference>
<dbReference type="HAMAP" id="MF_00167">
    <property type="entry name" value="CsrA"/>
    <property type="match status" value="1"/>
</dbReference>
<dbReference type="InterPro" id="IPR003751">
    <property type="entry name" value="CsrA"/>
</dbReference>
<dbReference type="InterPro" id="IPR036107">
    <property type="entry name" value="CsrA_sf"/>
</dbReference>
<dbReference type="NCBIfam" id="TIGR00202">
    <property type="entry name" value="csrA"/>
    <property type="match status" value="1"/>
</dbReference>
<dbReference type="NCBIfam" id="NF002469">
    <property type="entry name" value="PRK01712.1"/>
    <property type="match status" value="1"/>
</dbReference>
<dbReference type="PANTHER" id="PTHR34984">
    <property type="entry name" value="CARBON STORAGE REGULATOR"/>
    <property type="match status" value="1"/>
</dbReference>
<dbReference type="PANTHER" id="PTHR34984:SF1">
    <property type="entry name" value="CARBON STORAGE REGULATOR"/>
    <property type="match status" value="1"/>
</dbReference>
<dbReference type="Pfam" id="PF02599">
    <property type="entry name" value="CsrA"/>
    <property type="match status" value="1"/>
</dbReference>
<dbReference type="SUPFAM" id="SSF117130">
    <property type="entry name" value="CsrA-like"/>
    <property type="match status" value="1"/>
</dbReference>
<sequence length="61" mass="6856">MLILTRRVGETLMIGDEVTVTVLGVKGNQVRIGVNAPKEVSVHREEIYQRIQAEKSQQSSY</sequence>
<feature type="chain" id="PRO_1000118236" description="Translational regulator CsrA">
    <location>
        <begin position="1"/>
        <end position="61"/>
    </location>
</feature>
<gene>
    <name evidence="1" type="primary">csrA</name>
    <name type="ordered locus">ECIAI1_2787</name>
</gene>
<reference key="1">
    <citation type="journal article" date="2009" name="PLoS Genet.">
        <title>Organised genome dynamics in the Escherichia coli species results in highly diverse adaptive paths.</title>
        <authorList>
            <person name="Touchon M."/>
            <person name="Hoede C."/>
            <person name="Tenaillon O."/>
            <person name="Barbe V."/>
            <person name="Baeriswyl S."/>
            <person name="Bidet P."/>
            <person name="Bingen E."/>
            <person name="Bonacorsi S."/>
            <person name="Bouchier C."/>
            <person name="Bouvet O."/>
            <person name="Calteau A."/>
            <person name="Chiapello H."/>
            <person name="Clermont O."/>
            <person name="Cruveiller S."/>
            <person name="Danchin A."/>
            <person name="Diard M."/>
            <person name="Dossat C."/>
            <person name="Karoui M.E."/>
            <person name="Frapy E."/>
            <person name="Garry L."/>
            <person name="Ghigo J.M."/>
            <person name="Gilles A.M."/>
            <person name="Johnson J."/>
            <person name="Le Bouguenec C."/>
            <person name="Lescat M."/>
            <person name="Mangenot S."/>
            <person name="Martinez-Jehanne V."/>
            <person name="Matic I."/>
            <person name="Nassif X."/>
            <person name="Oztas S."/>
            <person name="Petit M.A."/>
            <person name="Pichon C."/>
            <person name="Rouy Z."/>
            <person name="Ruf C.S."/>
            <person name="Schneider D."/>
            <person name="Tourret J."/>
            <person name="Vacherie B."/>
            <person name="Vallenet D."/>
            <person name="Medigue C."/>
            <person name="Rocha E.P.C."/>
            <person name="Denamur E."/>
        </authorList>
    </citation>
    <scope>NUCLEOTIDE SEQUENCE [LARGE SCALE GENOMIC DNA]</scope>
    <source>
        <strain>IAI1</strain>
    </source>
</reference>
<proteinExistence type="inferred from homology"/>
<keyword id="KW-0010">Activator</keyword>
<keyword id="KW-0963">Cytoplasm</keyword>
<keyword id="KW-0678">Repressor</keyword>
<keyword id="KW-0694">RNA-binding</keyword>
<keyword id="KW-0810">Translation regulation</keyword>